<feature type="propeptide" id="PRO_0000029489" evidence="1">
    <location>
        <begin position="1"/>
        <end position="10"/>
    </location>
</feature>
<feature type="chain" id="PRO_0000029490" description="Photosystem II reaction center protein K" evidence="1">
    <location>
        <begin position="11"/>
        <end position="47"/>
    </location>
</feature>
<feature type="transmembrane region" description="Helical" evidence="1">
    <location>
        <begin position="22"/>
        <end position="42"/>
    </location>
</feature>
<gene>
    <name evidence="1" type="primary">psbK</name>
</gene>
<proteinExistence type="inferred from homology"/>
<geneLocation type="chloroplast"/>
<keyword id="KW-0150">Chloroplast</keyword>
<keyword id="KW-0472">Membrane</keyword>
<keyword id="KW-0602">Photosynthesis</keyword>
<keyword id="KW-0604">Photosystem II</keyword>
<keyword id="KW-0934">Plastid</keyword>
<keyword id="KW-0674">Reaction center</keyword>
<keyword id="KW-0793">Thylakoid</keyword>
<keyword id="KW-0812">Transmembrane</keyword>
<keyword id="KW-1133">Transmembrane helix</keyword>
<evidence type="ECO:0000255" key="1">
    <source>
        <dbReference type="HAMAP-Rule" id="MF_00441"/>
    </source>
</evidence>
<protein>
    <recommendedName>
        <fullName evidence="1">Photosystem II reaction center protein K</fullName>
        <shortName evidence="1">PSII-K</shortName>
    </recommendedName>
</protein>
<dbReference type="EMBL" id="AF166114">
    <property type="protein sequence ID" value="AAF43831.1"/>
    <property type="molecule type" value="Genomic_DNA"/>
</dbReference>
<dbReference type="RefSeq" id="NP_038390.1">
    <property type="nucleotide sequence ID" value="NC_002186.1"/>
</dbReference>
<dbReference type="SMR" id="Q9MUS0"/>
<dbReference type="GeneID" id="800928"/>
<dbReference type="GO" id="GO:0009535">
    <property type="term" value="C:chloroplast thylakoid membrane"/>
    <property type="evidence" value="ECO:0007669"/>
    <property type="project" value="UniProtKB-SubCell"/>
</dbReference>
<dbReference type="GO" id="GO:0009539">
    <property type="term" value="C:photosystem II reaction center"/>
    <property type="evidence" value="ECO:0007669"/>
    <property type="project" value="InterPro"/>
</dbReference>
<dbReference type="GO" id="GO:0015979">
    <property type="term" value="P:photosynthesis"/>
    <property type="evidence" value="ECO:0007669"/>
    <property type="project" value="UniProtKB-UniRule"/>
</dbReference>
<dbReference type="HAMAP" id="MF_00441">
    <property type="entry name" value="PSII_PsbK"/>
    <property type="match status" value="1"/>
</dbReference>
<dbReference type="InterPro" id="IPR003687">
    <property type="entry name" value="PSII_PsbK"/>
</dbReference>
<dbReference type="InterPro" id="IPR037270">
    <property type="entry name" value="PSII_PsbK_sf"/>
</dbReference>
<dbReference type="NCBIfam" id="NF002715">
    <property type="entry name" value="PRK02553.1"/>
    <property type="match status" value="1"/>
</dbReference>
<dbReference type="PANTHER" id="PTHR35325">
    <property type="match status" value="1"/>
</dbReference>
<dbReference type="PANTHER" id="PTHR35325:SF1">
    <property type="entry name" value="PHOTOSYSTEM II REACTION CENTER PROTEIN K"/>
    <property type="match status" value="1"/>
</dbReference>
<dbReference type="Pfam" id="PF02533">
    <property type="entry name" value="PsbK"/>
    <property type="match status" value="1"/>
</dbReference>
<dbReference type="SUPFAM" id="SSF161037">
    <property type="entry name" value="Photosystem II reaction center protein K, PsbK"/>
    <property type="match status" value="1"/>
</dbReference>
<accession>Q9MUS0</accession>
<sequence>MNIGFDMILAKLPEAYAMFDPLVDVLPVIPLLFLLLAFVWQASVSFR</sequence>
<comment type="function">
    <text evidence="1">One of the components of the core complex of photosystem II (PSII). PSII is a light-driven water:plastoquinone oxidoreductase that uses light energy to abstract electrons from H(2)O, generating O(2) and a proton gradient subsequently used for ATP formation. It consists of a core antenna complex that captures photons, and an electron transfer chain that converts photonic excitation into a charge separation.</text>
</comment>
<comment type="subunit">
    <text evidence="1">PSII is composed of 1 copy each of membrane proteins PsbA, PsbB, PsbC, PsbD, PsbE, PsbF, PsbH, PsbI, PsbJ, PsbK, PsbL, PsbM, PsbT, PsbX, PsbY, PsbZ, Psb30/Ycf12, at least 3 peripheral proteins of the oxygen-evolving complex and a large number of cofactors. It forms dimeric complexes.</text>
</comment>
<comment type="subcellular location">
    <subcellularLocation>
        <location evidence="1">Plastid</location>
        <location evidence="1">Chloroplast thylakoid membrane</location>
        <topology evidence="1">Single-pass membrane protein</topology>
    </subcellularLocation>
</comment>
<comment type="similarity">
    <text evidence="1">Belongs to the PsbK family.</text>
</comment>
<organism>
    <name type="scientific">Mesostigma viride</name>
    <name type="common">Green alga</name>
    <dbReference type="NCBI Taxonomy" id="41882"/>
    <lineage>
        <taxon>Eukaryota</taxon>
        <taxon>Viridiplantae</taxon>
        <taxon>Streptophyta</taxon>
        <taxon>Mesostigmatophyceae</taxon>
        <taxon>Mesostigmatales</taxon>
        <taxon>Mesostigmataceae</taxon>
        <taxon>Mesostigma</taxon>
    </lineage>
</organism>
<name>PSBK_MESVI</name>
<reference key="1">
    <citation type="journal article" date="2000" name="Nature">
        <title>Ancestral chloroplast genome in Mesostigma viride reveals an early branch of green plant evolution.</title>
        <authorList>
            <person name="Lemieux C."/>
            <person name="Otis C."/>
            <person name="Turmel M."/>
        </authorList>
    </citation>
    <scope>NUCLEOTIDE SEQUENCE [LARGE SCALE GENOMIC DNA]</scope>
    <source>
        <strain>NIES-296 / KY-14 / CCMP 2046</strain>
    </source>
</reference>